<feature type="signal peptide" evidence="2">
    <location>
        <begin position="1"/>
        <end position="22"/>
    </location>
</feature>
<feature type="chain" id="PRO_0000352698" description="Beta-defensin 13">
    <location>
        <begin position="23"/>
        <end position="66"/>
    </location>
</feature>
<feature type="disulfide bond" evidence="1">
    <location>
        <begin position="30"/>
        <end position="59"/>
    </location>
</feature>
<feature type="disulfide bond" evidence="1">
    <location>
        <begin position="37"/>
        <end position="51"/>
    </location>
</feature>
<feature type="disulfide bond" evidence="1">
    <location>
        <begin position="41"/>
        <end position="60"/>
    </location>
</feature>
<reference key="1">
    <citation type="journal article" date="2005" name="Physiol. Genomics">
        <title>Cross-species analysis of the mammalian beta-defensin gene family: presence of syntenic gene clusters and preferential expression in the male reproductive tract.</title>
        <authorList>
            <person name="Patil A.A."/>
            <person name="Cai Y."/>
            <person name="Sang Y."/>
            <person name="Blecha F."/>
            <person name="Zhang G."/>
        </authorList>
    </citation>
    <scope>NUCLEOTIDE SEQUENCE [MRNA]</scope>
</reference>
<dbReference type="EMBL" id="AY621345">
    <property type="protein sequence ID" value="AAT51884.1"/>
    <property type="molecule type" value="mRNA"/>
</dbReference>
<dbReference type="RefSeq" id="NP_001032592.1">
    <property type="nucleotide sequence ID" value="NM_001037503.2"/>
</dbReference>
<dbReference type="FunCoup" id="Q32ZH8">
    <property type="interactions" value="2"/>
</dbReference>
<dbReference type="STRING" id="10116.ENSRNOP00000054879"/>
<dbReference type="PaxDb" id="10116-ENSRNOP00000054879"/>
<dbReference type="Ensembl" id="ENSRNOT00000058071.2">
    <property type="protein sequence ID" value="ENSRNOP00000054879.1"/>
    <property type="gene ID" value="ENSRNOG00000038157.2"/>
</dbReference>
<dbReference type="GeneID" id="641626"/>
<dbReference type="KEGG" id="rno:641626"/>
<dbReference type="UCSC" id="RGD:1559883">
    <property type="organism name" value="rat"/>
</dbReference>
<dbReference type="AGR" id="RGD:1559883"/>
<dbReference type="CTD" id="246083"/>
<dbReference type="RGD" id="1559883">
    <property type="gene designation" value="Defb13"/>
</dbReference>
<dbReference type="eggNOG" id="ENOG502TF47">
    <property type="taxonomic scope" value="Eukaryota"/>
</dbReference>
<dbReference type="GeneTree" id="ENSGT00390000013953"/>
<dbReference type="HOGENOM" id="CLU_2757177_0_0_1"/>
<dbReference type="InParanoid" id="Q32ZH8"/>
<dbReference type="OMA" id="LYRRFLC"/>
<dbReference type="OrthoDB" id="9795234at2759"/>
<dbReference type="PhylomeDB" id="Q32ZH8"/>
<dbReference type="PRO" id="PR:Q32ZH8"/>
<dbReference type="Proteomes" id="UP000002494">
    <property type="component" value="Chromosome 16"/>
</dbReference>
<dbReference type="Bgee" id="ENSRNOG00000038157">
    <property type="expression patterns" value="Expressed in kidney and 3 other cell types or tissues"/>
</dbReference>
<dbReference type="GO" id="GO:0005576">
    <property type="term" value="C:extracellular region"/>
    <property type="evidence" value="ECO:0007669"/>
    <property type="project" value="UniProtKB-SubCell"/>
</dbReference>
<dbReference type="GO" id="GO:0008289">
    <property type="term" value="F:lipid binding"/>
    <property type="evidence" value="ECO:0000266"/>
    <property type="project" value="RGD"/>
</dbReference>
<dbReference type="GO" id="GO:0042742">
    <property type="term" value="P:defense response to bacterium"/>
    <property type="evidence" value="ECO:0007669"/>
    <property type="project" value="UniProtKB-KW"/>
</dbReference>
<dbReference type="GO" id="GO:0045087">
    <property type="term" value="P:innate immune response"/>
    <property type="evidence" value="ECO:0007669"/>
    <property type="project" value="InterPro"/>
</dbReference>
<dbReference type="InterPro" id="IPR025933">
    <property type="entry name" value="Beta_defensin_dom"/>
</dbReference>
<dbReference type="Pfam" id="PF13841">
    <property type="entry name" value="Defensin_beta_2"/>
    <property type="match status" value="1"/>
</dbReference>
<keyword id="KW-0044">Antibiotic</keyword>
<keyword id="KW-0929">Antimicrobial</keyword>
<keyword id="KW-0211">Defensin</keyword>
<keyword id="KW-1015">Disulfide bond</keyword>
<keyword id="KW-1185">Reference proteome</keyword>
<keyword id="KW-0964">Secreted</keyword>
<keyword id="KW-0732">Signal</keyword>
<accession>Q32ZH8</accession>
<protein>
    <recommendedName>
        <fullName>Beta-defensin 13</fullName>
        <shortName>BD-13</shortName>
    </recommendedName>
    <alternativeName>
        <fullName>Defensin, beta 13</fullName>
    </alternativeName>
</protein>
<organism>
    <name type="scientific">Rattus norvegicus</name>
    <name type="common">Rat</name>
    <dbReference type="NCBI Taxonomy" id="10116"/>
    <lineage>
        <taxon>Eukaryota</taxon>
        <taxon>Metazoa</taxon>
        <taxon>Chordata</taxon>
        <taxon>Craniata</taxon>
        <taxon>Vertebrata</taxon>
        <taxon>Euteleostomi</taxon>
        <taxon>Mammalia</taxon>
        <taxon>Eutheria</taxon>
        <taxon>Euarchontoglires</taxon>
        <taxon>Glires</taxon>
        <taxon>Rodentia</taxon>
        <taxon>Myomorpha</taxon>
        <taxon>Muroidea</taxon>
        <taxon>Muridae</taxon>
        <taxon>Murinae</taxon>
        <taxon>Rattus</taxon>
    </lineage>
</organism>
<name>DFB13_RAT</name>
<proteinExistence type="inferred from homology"/>
<gene>
    <name type="primary">Defb13</name>
</gene>
<comment type="function">
    <text evidence="1">Has antibacterial activity.</text>
</comment>
<comment type="subcellular location">
    <subcellularLocation>
        <location evidence="1">Secreted</location>
    </subcellularLocation>
</comment>
<comment type="similarity">
    <text evidence="3">Belongs to the beta-defensin family.</text>
</comment>
<sequence length="66" mass="7539">MRIFSLIVAGLVLLIQLHPAKGTLYRRFLCKKMKGRCETACLSFEKKIGTCRADLTPLCCKEKKKH</sequence>
<evidence type="ECO:0000250" key="1"/>
<evidence type="ECO:0000255" key="2"/>
<evidence type="ECO:0000305" key="3"/>